<accession>D1Z042</accession>
<protein>
    <recommendedName>
        <fullName evidence="1">Cysteate synthase</fullName>
        <shortName evidence="1">CS</shortName>
        <shortName evidence="1">Cya synthase</shortName>
        <ecNumber evidence="1">2.5.1.76</ecNumber>
    </recommendedName>
</protein>
<name>CYAS_METPS</name>
<dbReference type="EC" id="2.5.1.76" evidence="1"/>
<dbReference type="EMBL" id="AP011532">
    <property type="protein sequence ID" value="BAI62064.1"/>
    <property type="molecule type" value="Genomic_DNA"/>
</dbReference>
<dbReference type="RefSeq" id="WP_012900738.1">
    <property type="nucleotide sequence ID" value="NC_013665.1"/>
</dbReference>
<dbReference type="SMR" id="D1Z042"/>
<dbReference type="STRING" id="304371.MCP_1992"/>
<dbReference type="GeneID" id="8682885"/>
<dbReference type="KEGG" id="mpd:MCP_1992"/>
<dbReference type="PATRIC" id="fig|304371.9.peg.2033"/>
<dbReference type="eggNOG" id="arCOG01434">
    <property type="taxonomic scope" value="Archaea"/>
</dbReference>
<dbReference type="InParanoid" id="D1Z042"/>
<dbReference type="OrthoDB" id="6371at2157"/>
<dbReference type="UniPathway" id="UPA00355"/>
<dbReference type="Proteomes" id="UP000001882">
    <property type="component" value="Chromosome"/>
</dbReference>
<dbReference type="GO" id="GO:0005524">
    <property type="term" value="F:ATP binding"/>
    <property type="evidence" value="ECO:0007669"/>
    <property type="project" value="TreeGrafter"/>
</dbReference>
<dbReference type="GO" id="GO:0044686">
    <property type="term" value="F:cysteate synthase activity"/>
    <property type="evidence" value="ECO:0007669"/>
    <property type="project" value="UniProtKB-UniRule"/>
</dbReference>
<dbReference type="GO" id="GO:0003941">
    <property type="term" value="F:L-serine ammonia-lyase activity"/>
    <property type="evidence" value="ECO:0007669"/>
    <property type="project" value="TreeGrafter"/>
</dbReference>
<dbReference type="GO" id="GO:0000287">
    <property type="term" value="F:magnesium ion binding"/>
    <property type="evidence" value="ECO:0007669"/>
    <property type="project" value="TreeGrafter"/>
</dbReference>
<dbReference type="GO" id="GO:0030170">
    <property type="term" value="F:pyridoxal phosphate binding"/>
    <property type="evidence" value="ECO:0007669"/>
    <property type="project" value="UniProtKB-UniRule"/>
</dbReference>
<dbReference type="GO" id="GO:0030378">
    <property type="term" value="F:serine racemase activity"/>
    <property type="evidence" value="ECO:0007669"/>
    <property type="project" value="TreeGrafter"/>
</dbReference>
<dbReference type="GO" id="GO:0018114">
    <property type="term" value="F:threonine racemase activity"/>
    <property type="evidence" value="ECO:0007669"/>
    <property type="project" value="TreeGrafter"/>
</dbReference>
<dbReference type="GO" id="GO:0019295">
    <property type="term" value="P:coenzyme M biosynthetic process"/>
    <property type="evidence" value="ECO:0007669"/>
    <property type="project" value="UniProtKB-UniRule"/>
</dbReference>
<dbReference type="GO" id="GO:0070179">
    <property type="term" value="P:D-serine biosynthetic process"/>
    <property type="evidence" value="ECO:0007669"/>
    <property type="project" value="TreeGrafter"/>
</dbReference>
<dbReference type="Gene3D" id="3.40.50.1100">
    <property type="match status" value="2"/>
</dbReference>
<dbReference type="HAMAP" id="MF_02109">
    <property type="entry name" value="Cya_synthase"/>
    <property type="match status" value="1"/>
</dbReference>
<dbReference type="InterPro" id="IPR022401">
    <property type="entry name" value="Cysteate_synthase"/>
</dbReference>
<dbReference type="InterPro" id="IPR001926">
    <property type="entry name" value="TrpB-like_PALP"/>
</dbReference>
<dbReference type="InterPro" id="IPR036052">
    <property type="entry name" value="TrpB-like_PALP_sf"/>
</dbReference>
<dbReference type="NCBIfam" id="TIGR03844">
    <property type="entry name" value="cysteate_syn"/>
    <property type="match status" value="1"/>
</dbReference>
<dbReference type="PANTHER" id="PTHR43050">
    <property type="entry name" value="SERINE / THREONINE RACEMASE FAMILY MEMBER"/>
    <property type="match status" value="1"/>
</dbReference>
<dbReference type="PANTHER" id="PTHR43050:SF1">
    <property type="entry name" value="SERINE RACEMASE"/>
    <property type="match status" value="1"/>
</dbReference>
<dbReference type="Pfam" id="PF00291">
    <property type="entry name" value="PALP"/>
    <property type="match status" value="1"/>
</dbReference>
<dbReference type="SUPFAM" id="SSF53686">
    <property type="entry name" value="Tryptophan synthase beta subunit-like PLP-dependent enzymes"/>
    <property type="match status" value="1"/>
</dbReference>
<gene>
    <name type="ordered locus">MCP_1992</name>
</gene>
<feature type="chain" id="PRO_0000392644" description="Cysteate synthase">
    <location>
        <begin position="1"/>
        <end position="427"/>
    </location>
</feature>
<feature type="binding site" evidence="1">
    <location>
        <position position="130"/>
    </location>
    <ligand>
        <name>pyridoxal 5'-phosphate</name>
        <dbReference type="ChEBI" id="CHEBI:597326"/>
    </ligand>
</feature>
<feature type="binding site" evidence="1">
    <location>
        <position position="382"/>
    </location>
    <ligand>
        <name>pyridoxal 5'-phosphate</name>
        <dbReference type="ChEBI" id="CHEBI:597326"/>
    </ligand>
</feature>
<feature type="modified residue" description="N6-(pyridoxal phosphate)lysine" evidence="1">
    <location>
        <position position="104"/>
    </location>
</feature>
<proteinExistence type="inferred from homology"/>
<reference key="1">
    <citation type="journal article" date="2011" name="PLoS ONE">
        <title>Genome sequence of a mesophilic hydrogenotrophic methanogen Methanocella paludicola, the first cultivated representative of the order Methanocellales.</title>
        <authorList>
            <person name="Sakai S."/>
            <person name="Takaki Y."/>
            <person name="Shimamura S."/>
            <person name="Sekine M."/>
            <person name="Tajima T."/>
            <person name="Kosugi H."/>
            <person name="Ichikawa N."/>
            <person name="Tasumi E."/>
            <person name="Hiraki A.T."/>
            <person name="Shimizu A."/>
            <person name="Kato Y."/>
            <person name="Nishiko R."/>
            <person name="Mori K."/>
            <person name="Fujita N."/>
            <person name="Imachi H."/>
            <person name="Takai K."/>
        </authorList>
    </citation>
    <scope>NUCLEOTIDE SEQUENCE [LARGE SCALE GENOMIC DNA]</scope>
    <source>
        <strain>DSM 17711 / JCM 13418 / NBRC 101707 / SANAE</strain>
    </source>
</reference>
<comment type="function">
    <text evidence="1">Specifically catalyzes the beta-elimination of phosphate from L-phosphoserine and the beta-addition of sulfite to the dehydroalanine intermediate to produce L-cysteate.</text>
</comment>
<comment type="catalytic activity">
    <reaction evidence="1">
        <text>O-phospho-L-serine + sulfite + H(+) = L-cysteate + phosphate</text>
        <dbReference type="Rhea" id="RHEA:26486"/>
        <dbReference type="ChEBI" id="CHEBI:15378"/>
        <dbReference type="ChEBI" id="CHEBI:17359"/>
        <dbReference type="ChEBI" id="CHEBI:43474"/>
        <dbReference type="ChEBI" id="CHEBI:57524"/>
        <dbReference type="ChEBI" id="CHEBI:58090"/>
        <dbReference type="EC" id="2.5.1.76"/>
    </reaction>
</comment>
<comment type="cofactor">
    <cofactor evidence="1">
        <name>pyridoxal 5'-phosphate</name>
        <dbReference type="ChEBI" id="CHEBI:597326"/>
    </cofactor>
</comment>
<comment type="pathway">
    <text evidence="1">Cofactor biosynthesis; coenzyme M biosynthesis.</text>
</comment>
<comment type="subunit">
    <text evidence="1">Homotrimer.</text>
</comment>
<comment type="similarity">
    <text evidence="1">Belongs to the threonine synthase family. Cysteate synthase subfamily.</text>
</comment>
<sequence length="427" mass="47102">MGTYTLECAGCRHTIPDNYTLRCECGAGLIRARYTARQISPRDLPGMWRYYDWLPTRGHLDTPGAPVTFKSQGLSKELGLKELYISFNGYWPEMGARMDTCSFKELEAPPTIVRAREHGGRAMVLASVGNTARAFAYLSTLTGFPVVIVVPRKSAHNLWIPGREPGDSIKLITMEEGNDYSDAIRLSERIAGIEGVMPEGGARNVARRDGMGVTMLDAAVTMKRMPDDYFQAIGSGTGGIAAWEAALRLRDDGRFGDRLPKLHLAQNLPFAPMYYAWKAGRRDIIPELDMPEAKKQIEAMYTDILSNRNPPYGVTGGVYDALIDTQGDMYAVTNDEAIRAKRIFEKAEGIDILPPAAVAVAALLQACDRGLEKKRTVLLNITGGGLERLRKEVSMSMVKPCLNVEGPEVPLENITKAIQWQTLSKKS</sequence>
<evidence type="ECO:0000255" key="1">
    <source>
        <dbReference type="HAMAP-Rule" id="MF_02109"/>
    </source>
</evidence>
<keyword id="KW-0174">Coenzyme M biosynthesis</keyword>
<keyword id="KW-0663">Pyridoxal phosphate</keyword>
<keyword id="KW-0808">Transferase</keyword>
<organism>
    <name type="scientific">Methanocella paludicola (strain DSM 17711 / JCM 13418 / NBRC 101707 / SANAE)</name>
    <dbReference type="NCBI Taxonomy" id="304371"/>
    <lineage>
        <taxon>Archaea</taxon>
        <taxon>Methanobacteriati</taxon>
        <taxon>Methanobacteriota</taxon>
        <taxon>Stenosarchaea group</taxon>
        <taxon>Methanomicrobia</taxon>
        <taxon>Methanocellales</taxon>
        <taxon>Methanocellaceae</taxon>
        <taxon>Methanocella</taxon>
    </lineage>
</organism>